<evidence type="ECO:0000255" key="1">
    <source>
        <dbReference type="HAMAP-Rule" id="MF_01356"/>
    </source>
</evidence>
<reference key="1">
    <citation type="journal article" date="2007" name="Genome Res.">
        <title>Reductive evolution and niche adaptation inferred from the genome of Mycobacterium ulcerans, the causative agent of Buruli ulcer.</title>
        <authorList>
            <person name="Stinear T.P."/>
            <person name="Seemann T."/>
            <person name="Pidot S."/>
            <person name="Frigui W."/>
            <person name="Reysset G."/>
            <person name="Garnier T."/>
            <person name="Meurice G."/>
            <person name="Simon D."/>
            <person name="Bouchier C."/>
            <person name="Ma L."/>
            <person name="Tichit M."/>
            <person name="Porter J.L."/>
            <person name="Ryan J."/>
            <person name="Johnson P.D.R."/>
            <person name="Davies J.K."/>
            <person name="Jenkin G.A."/>
            <person name="Small P.L.C."/>
            <person name="Jones L.M."/>
            <person name="Tekaia F."/>
            <person name="Laval F."/>
            <person name="Daffe M."/>
            <person name="Parkhill J."/>
            <person name="Cole S.T."/>
        </authorList>
    </citation>
    <scope>NUCLEOTIDE SEQUENCE [LARGE SCALE GENOMIC DNA]</scope>
    <source>
        <strain>Agy99</strain>
    </source>
</reference>
<organism>
    <name type="scientific">Mycobacterium ulcerans (strain Agy99)</name>
    <dbReference type="NCBI Taxonomy" id="362242"/>
    <lineage>
        <taxon>Bacteria</taxon>
        <taxon>Bacillati</taxon>
        <taxon>Actinomycetota</taxon>
        <taxon>Actinomycetes</taxon>
        <taxon>Mycobacteriales</taxon>
        <taxon>Mycobacteriaceae</taxon>
        <taxon>Mycobacterium</taxon>
        <taxon>Mycobacterium ulcerans group</taxon>
    </lineage>
</organism>
<name>NUOB_MYCUA</name>
<keyword id="KW-0004">4Fe-4S</keyword>
<keyword id="KW-1003">Cell membrane</keyword>
<keyword id="KW-0408">Iron</keyword>
<keyword id="KW-0411">Iron-sulfur</keyword>
<keyword id="KW-0472">Membrane</keyword>
<keyword id="KW-0479">Metal-binding</keyword>
<keyword id="KW-0520">NAD</keyword>
<keyword id="KW-0874">Quinone</keyword>
<keyword id="KW-1278">Translocase</keyword>
<keyword id="KW-0813">Transport</keyword>
<proteinExistence type="inferred from homology"/>
<sequence length="184" mass="20224">MGLEEQLPGGILLSTVEKVAGYVRKNSLWPATFGLACCAIEMMATAGPRFDIARFGMERFSATPRQADLMIVAGRVSQKMAPVLRQIYDQMAEPKWVLAMGVCASSGGMFNNYAIVQGVDHVVPVDIYLPGCPPRPEMLLHAILKLHEKIQEMPLGVNRERAIAEAEEAAMLARPTIEMRGLLR</sequence>
<gene>
    <name evidence="1" type="primary">nuoB</name>
    <name type="ordered locus">MUL_2460</name>
</gene>
<accession>A0PR39</accession>
<feature type="chain" id="PRO_0000376285" description="NADH-quinone oxidoreductase subunit B">
    <location>
        <begin position="1"/>
        <end position="184"/>
    </location>
</feature>
<feature type="binding site" evidence="1">
    <location>
        <position position="37"/>
    </location>
    <ligand>
        <name>[4Fe-4S] cluster</name>
        <dbReference type="ChEBI" id="CHEBI:49883"/>
    </ligand>
</feature>
<feature type="binding site" evidence="1">
    <location>
        <position position="38"/>
    </location>
    <ligand>
        <name>[4Fe-4S] cluster</name>
        <dbReference type="ChEBI" id="CHEBI:49883"/>
    </ligand>
</feature>
<feature type="binding site" evidence="1">
    <location>
        <position position="103"/>
    </location>
    <ligand>
        <name>[4Fe-4S] cluster</name>
        <dbReference type="ChEBI" id="CHEBI:49883"/>
    </ligand>
</feature>
<feature type="binding site" evidence="1">
    <location>
        <position position="132"/>
    </location>
    <ligand>
        <name>[4Fe-4S] cluster</name>
        <dbReference type="ChEBI" id="CHEBI:49883"/>
    </ligand>
</feature>
<dbReference type="EC" id="7.1.1.-" evidence="1"/>
<dbReference type="EMBL" id="CP000325">
    <property type="protein sequence ID" value="ABL04808.1"/>
    <property type="molecule type" value="Genomic_DNA"/>
</dbReference>
<dbReference type="RefSeq" id="WP_011740423.1">
    <property type="nucleotide sequence ID" value="NC_008611.1"/>
</dbReference>
<dbReference type="SMR" id="A0PR39"/>
<dbReference type="KEGG" id="mul:MUL_2460"/>
<dbReference type="eggNOG" id="COG0377">
    <property type="taxonomic scope" value="Bacteria"/>
</dbReference>
<dbReference type="HOGENOM" id="CLU_055737_7_3_11"/>
<dbReference type="Proteomes" id="UP000000765">
    <property type="component" value="Chromosome"/>
</dbReference>
<dbReference type="GO" id="GO:0005886">
    <property type="term" value="C:plasma membrane"/>
    <property type="evidence" value="ECO:0007669"/>
    <property type="project" value="UniProtKB-SubCell"/>
</dbReference>
<dbReference type="GO" id="GO:0045271">
    <property type="term" value="C:respiratory chain complex I"/>
    <property type="evidence" value="ECO:0007669"/>
    <property type="project" value="TreeGrafter"/>
</dbReference>
<dbReference type="GO" id="GO:0051539">
    <property type="term" value="F:4 iron, 4 sulfur cluster binding"/>
    <property type="evidence" value="ECO:0007669"/>
    <property type="project" value="UniProtKB-KW"/>
</dbReference>
<dbReference type="GO" id="GO:0005506">
    <property type="term" value="F:iron ion binding"/>
    <property type="evidence" value="ECO:0007669"/>
    <property type="project" value="UniProtKB-UniRule"/>
</dbReference>
<dbReference type="GO" id="GO:0008137">
    <property type="term" value="F:NADH dehydrogenase (ubiquinone) activity"/>
    <property type="evidence" value="ECO:0007669"/>
    <property type="project" value="InterPro"/>
</dbReference>
<dbReference type="GO" id="GO:0050136">
    <property type="term" value="F:NADH:ubiquinone reductase (non-electrogenic) activity"/>
    <property type="evidence" value="ECO:0007669"/>
    <property type="project" value="UniProtKB-UniRule"/>
</dbReference>
<dbReference type="GO" id="GO:0048038">
    <property type="term" value="F:quinone binding"/>
    <property type="evidence" value="ECO:0007669"/>
    <property type="project" value="UniProtKB-KW"/>
</dbReference>
<dbReference type="GO" id="GO:0009060">
    <property type="term" value="P:aerobic respiration"/>
    <property type="evidence" value="ECO:0007669"/>
    <property type="project" value="TreeGrafter"/>
</dbReference>
<dbReference type="GO" id="GO:0015990">
    <property type="term" value="P:electron transport coupled proton transport"/>
    <property type="evidence" value="ECO:0007669"/>
    <property type="project" value="TreeGrafter"/>
</dbReference>
<dbReference type="FunFam" id="3.40.50.12280:FF:000004">
    <property type="entry name" value="NADH-quinone oxidoreductase subunit B"/>
    <property type="match status" value="1"/>
</dbReference>
<dbReference type="Gene3D" id="3.40.50.12280">
    <property type="match status" value="1"/>
</dbReference>
<dbReference type="HAMAP" id="MF_01356">
    <property type="entry name" value="NDH1_NuoB"/>
    <property type="match status" value="1"/>
</dbReference>
<dbReference type="InterPro" id="IPR006137">
    <property type="entry name" value="NADH_UbQ_OxRdtase-like_20kDa"/>
</dbReference>
<dbReference type="InterPro" id="IPR006138">
    <property type="entry name" value="NADH_UQ_OxRdtase_20Kd_su"/>
</dbReference>
<dbReference type="NCBIfam" id="TIGR01957">
    <property type="entry name" value="nuoB_fam"/>
    <property type="match status" value="1"/>
</dbReference>
<dbReference type="NCBIfam" id="NF005012">
    <property type="entry name" value="PRK06411.1"/>
    <property type="match status" value="1"/>
</dbReference>
<dbReference type="PANTHER" id="PTHR11995">
    <property type="entry name" value="NADH DEHYDROGENASE"/>
    <property type="match status" value="1"/>
</dbReference>
<dbReference type="PANTHER" id="PTHR11995:SF14">
    <property type="entry name" value="NADH DEHYDROGENASE [UBIQUINONE] IRON-SULFUR PROTEIN 7, MITOCHONDRIAL"/>
    <property type="match status" value="1"/>
</dbReference>
<dbReference type="Pfam" id="PF01058">
    <property type="entry name" value="Oxidored_q6"/>
    <property type="match status" value="1"/>
</dbReference>
<dbReference type="SUPFAM" id="SSF56770">
    <property type="entry name" value="HydA/Nqo6-like"/>
    <property type="match status" value="1"/>
</dbReference>
<dbReference type="PROSITE" id="PS01150">
    <property type="entry name" value="COMPLEX1_20K"/>
    <property type="match status" value="1"/>
</dbReference>
<protein>
    <recommendedName>
        <fullName evidence="1">NADH-quinone oxidoreductase subunit B</fullName>
        <ecNumber evidence="1">7.1.1.-</ecNumber>
    </recommendedName>
    <alternativeName>
        <fullName evidence="1">NADH dehydrogenase I subunit B</fullName>
    </alternativeName>
    <alternativeName>
        <fullName evidence="1">NDH-1 subunit B</fullName>
    </alternativeName>
</protein>
<comment type="function">
    <text evidence="1">NDH-1 shuttles electrons from NADH, via FMN and iron-sulfur (Fe-S) centers, to quinones in the respiratory chain. The immediate electron acceptor for the enzyme in this species is believed to be a menaquinone. Couples the redox reaction to proton translocation (for every two electrons transferred, four hydrogen ions are translocated across the cytoplasmic membrane), and thus conserves the redox energy in a proton gradient.</text>
</comment>
<comment type="catalytic activity">
    <reaction evidence="1">
        <text>a quinone + NADH + 5 H(+)(in) = a quinol + NAD(+) + 4 H(+)(out)</text>
        <dbReference type="Rhea" id="RHEA:57888"/>
        <dbReference type="ChEBI" id="CHEBI:15378"/>
        <dbReference type="ChEBI" id="CHEBI:24646"/>
        <dbReference type="ChEBI" id="CHEBI:57540"/>
        <dbReference type="ChEBI" id="CHEBI:57945"/>
        <dbReference type="ChEBI" id="CHEBI:132124"/>
    </reaction>
</comment>
<comment type="cofactor">
    <cofactor evidence="1">
        <name>[4Fe-4S] cluster</name>
        <dbReference type="ChEBI" id="CHEBI:49883"/>
    </cofactor>
    <text evidence="1">Binds 1 [4Fe-4S] cluster.</text>
</comment>
<comment type="subunit">
    <text evidence="1">NDH-1 is composed of 14 different subunits. Subunits NuoB, C, D, E, F, and G constitute the peripheral sector of the complex.</text>
</comment>
<comment type="subcellular location">
    <subcellularLocation>
        <location evidence="1">Cell membrane</location>
        <topology evidence="1">Peripheral membrane protein</topology>
        <orientation evidence="1">Cytoplasmic side</orientation>
    </subcellularLocation>
</comment>
<comment type="similarity">
    <text evidence="1">Belongs to the complex I 20 kDa subunit family.</text>
</comment>